<evidence type="ECO:0000250" key="1"/>
<evidence type="ECO:0000250" key="2">
    <source>
        <dbReference type="UniProtKB" id="P14618"/>
    </source>
</evidence>
<evidence type="ECO:0000305" key="3"/>
<reference key="1">
    <citation type="journal article" date="1994" name="Biochem. Biophys. Res. Commun.">
        <title>Cloning and sequence analysis of the gene encoding pyruvate kinase in Trypanoplasma borelli.</title>
        <authorList>
            <person name="Ernest I."/>
            <person name="Opperdoes F.R."/>
            <person name="Michels P.A.M."/>
        </authorList>
    </citation>
    <scope>NUCLEOTIDE SEQUENCE [GENOMIC DNA]</scope>
</reference>
<feature type="chain" id="PRO_0000112105" description="Pyruvate kinase">
    <location>
        <begin position="1"/>
        <end position="498"/>
    </location>
</feature>
<feature type="binding site" evidence="1">
    <location>
        <position position="53"/>
    </location>
    <ligand>
        <name>substrate</name>
    </ligand>
</feature>
<feature type="binding site" evidence="2">
    <location>
        <begin position="55"/>
        <end position="58"/>
    </location>
    <ligand>
        <name>ATP</name>
        <dbReference type="ChEBI" id="CHEBI:30616"/>
    </ligand>
</feature>
<feature type="binding site" evidence="1">
    <location>
        <position position="55"/>
    </location>
    <ligand>
        <name>K(+)</name>
        <dbReference type="ChEBI" id="CHEBI:29103"/>
    </ligand>
</feature>
<feature type="binding site" evidence="1">
    <location>
        <position position="57"/>
    </location>
    <ligand>
        <name>K(+)</name>
        <dbReference type="ChEBI" id="CHEBI:29103"/>
    </ligand>
</feature>
<feature type="binding site" evidence="1">
    <location>
        <position position="87"/>
    </location>
    <ligand>
        <name>K(+)</name>
        <dbReference type="ChEBI" id="CHEBI:29103"/>
    </ligand>
</feature>
<feature type="binding site" evidence="1">
    <location>
        <position position="88"/>
    </location>
    <ligand>
        <name>K(+)</name>
        <dbReference type="ChEBI" id="CHEBI:29103"/>
    </ligand>
</feature>
<feature type="binding site" evidence="2">
    <location>
        <position position="94"/>
    </location>
    <ligand>
        <name>ATP</name>
        <dbReference type="ChEBI" id="CHEBI:30616"/>
    </ligand>
</feature>
<feature type="binding site" evidence="2">
    <location>
        <position position="178"/>
    </location>
    <ligand>
        <name>ATP</name>
        <dbReference type="ChEBI" id="CHEBI:30616"/>
    </ligand>
</feature>
<feature type="binding site" evidence="1">
    <location>
        <position position="240"/>
    </location>
    <ligand>
        <name>Mg(2+)</name>
        <dbReference type="ChEBI" id="CHEBI:18420"/>
    </ligand>
</feature>
<feature type="binding site" evidence="1">
    <location>
        <position position="263"/>
    </location>
    <ligand>
        <name>substrate</name>
    </ligand>
</feature>
<feature type="binding site" evidence="1">
    <location>
        <position position="264"/>
    </location>
    <ligand>
        <name>Mg(2+)</name>
        <dbReference type="ChEBI" id="CHEBI:18420"/>
    </ligand>
</feature>
<feature type="binding site" evidence="1">
    <location>
        <position position="264"/>
    </location>
    <ligand>
        <name>substrate</name>
    </ligand>
</feature>
<feature type="binding site" evidence="1">
    <location>
        <position position="296"/>
    </location>
    <ligand>
        <name>substrate</name>
    </ligand>
</feature>
<feature type="site" description="Transition state stabilizer" evidence="1">
    <location>
        <position position="238"/>
    </location>
</feature>
<gene>
    <name type="primary">PYK</name>
</gene>
<proteinExistence type="inferred from homology"/>
<accession>Q27788</accession>
<accession>Q27789</accession>
<keyword id="KW-0067">ATP-binding</keyword>
<keyword id="KW-0324">Glycolysis</keyword>
<keyword id="KW-0418">Kinase</keyword>
<keyword id="KW-0460">Magnesium</keyword>
<keyword id="KW-0479">Metal-binding</keyword>
<keyword id="KW-0547">Nucleotide-binding</keyword>
<keyword id="KW-0630">Potassium</keyword>
<keyword id="KW-0670">Pyruvate</keyword>
<keyword id="KW-0808">Transferase</keyword>
<organism>
    <name type="scientific">Trypanoplasma borreli</name>
    <dbReference type="NCBI Taxonomy" id="5710"/>
    <lineage>
        <taxon>Eukaryota</taxon>
        <taxon>Discoba</taxon>
        <taxon>Euglenozoa</taxon>
        <taxon>Kinetoplastea</taxon>
        <taxon>Metakinetoplastina</taxon>
        <taxon>Parabodonida</taxon>
        <taxon>Trypanoplasma</taxon>
    </lineage>
</organism>
<dbReference type="EC" id="2.7.1.40"/>
<dbReference type="EMBL" id="X77255">
    <property type="protein sequence ID" value="CAA54472.1"/>
    <property type="molecule type" value="Genomic_DNA"/>
</dbReference>
<dbReference type="EMBL" id="X77255">
    <property type="protein sequence ID" value="CAA54473.1"/>
    <property type="molecule type" value="Genomic_DNA"/>
</dbReference>
<dbReference type="PIR" id="JC2456">
    <property type="entry name" value="JC2456"/>
</dbReference>
<dbReference type="SMR" id="Q27788"/>
<dbReference type="UniPathway" id="UPA00109">
    <property type="reaction ID" value="UER00188"/>
</dbReference>
<dbReference type="GO" id="GO:0005524">
    <property type="term" value="F:ATP binding"/>
    <property type="evidence" value="ECO:0007669"/>
    <property type="project" value="UniProtKB-KW"/>
</dbReference>
<dbReference type="GO" id="GO:0016301">
    <property type="term" value="F:kinase activity"/>
    <property type="evidence" value="ECO:0007669"/>
    <property type="project" value="UniProtKB-KW"/>
</dbReference>
<dbReference type="GO" id="GO:0000287">
    <property type="term" value="F:magnesium ion binding"/>
    <property type="evidence" value="ECO:0007669"/>
    <property type="project" value="InterPro"/>
</dbReference>
<dbReference type="GO" id="GO:0030955">
    <property type="term" value="F:potassium ion binding"/>
    <property type="evidence" value="ECO:0007669"/>
    <property type="project" value="InterPro"/>
</dbReference>
<dbReference type="GO" id="GO:0004743">
    <property type="term" value="F:pyruvate kinase activity"/>
    <property type="evidence" value="ECO:0007669"/>
    <property type="project" value="UniProtKB-EC"/>
</dbReference>
<dbReference type="CDD" id="cd00288">
    <property type="entry name" value="Pyruvate_Kinase"/>
    <property type="match status" value="1"/>
</dbReference>
<dbReference type="FunFam" id="2.40.33.10:FF:000001">
    <property type="entry name" value="Pyruvate kinase"/>
    <property type="match status" value="1"/>
</dbReference>
<dbReference type="FunFam" id="3.20.20.60:FF:000025">
    <property type="entry name" value="Pyruvate kinase"/>
    <property type="match status" value="1"/>
</dbReference>
<dbReference type="Gene3D" id="3.20.20.60">
    <property type="entry name" value="Phosphoenolpyruvate-binding domains"/>
    <property type="match status" value="1"/>
</dbReference>
<dbReference type="Gene3D" id="2.40.33.10">
    <property type="entry name" value="PK beta-barrel domain-like"/>
    <property type="match status" value="1"/>
</dbReference>
<dbReference type="Gene3D" id="3.40.1380.20">
    <property type="entry name" value="Pyruvate kinase, C-terminal domain"/>
    <property type="match status" value="1"/>
</dbReference>
<dbReference type="InterPro" id="IPR001697">
    <property type="entry name" value="Pyr_Knase"/>
</dbReference>
<dbReference type="InterPro" id="IPR015813">
    <property type="entry name" value="Pyrv/PenolPyrv_kinase-like_dom"/>
</dbReference>
<dbReference type="InterPro" id="IPR040442">
    <property type="entry name" value="Pyrv_kinase-like_dom_sf"/>
</dbReference>
<dbReference type="InterPro" id="IPR011037">
    <property type="entry name" value="Pyrv_Knase-like_insert_dom_sf"/>
</dbReference>
<dbReference type="InterPro" id="IPR018209">
    <property type="entry name" value="Pyrv_Knase_AS"/>
</dbReference>
<dbReference type="InterPro" id="IPR015793">
    <property type="entry name" value="Pyrv_Knase_brl"/>
</dbReference>
<dbReference type="InterPro" id="IPR015795">
    <property type="entry name" value="Pyrv_Knase_C"/>
</dbReference>
<dbReference type="InterPro" id="IPR036918">
    <property type="entry name" value="Pyrv_Knase_C_sf"/>
</dbReference>
<dbReference type="InterPro" id="IPR015806">
    <property type="entry name" value="Pyrv_Knase_insert_dom_sf"/>
</dbReference>
<dbReference type="NCBIfam" id="NF004491">
    <property type="entry name" value="PRK05826.1"/>
    <property type="match status" value="1"/>
</dbReference>
<dbReference type="NCBIfam" id="NF004978">
    <property type="entry name" value="PRK06354.1"/>
    <property type="match status" value="1"/>
</dbReference>
<dbReference type="NCBIfam" id="TIGR01064">
    <property type="entry name" value="pyruv_kin"/>
    <property type="match status" value="1"/>
</dbReference>
<dbReference type="PANTHER" id="PTHR11817">
    <property type="entry name" value="PYRUVATE KINASE"/>
    <property type="match status" value="1"/>
</dbReference>
<dbReference type="Pfam" id="PF00224">
    <property type="entry name" value="PK"/>
    <property type="match status" value="1"/>
</dbReference>
<dbReference type="Pfam" id="PF02887">
    <property type="entry name" value="PK_C"/>
    <property type="match status" value="1"/>
</dbReference>
<dbReference type="PRINTS" id="PR01050">
    <property type="entry name" value="PYRUVTKNASE"/>
</dbReference>
<dbReference type="SUPFAM" id="SSF51621">
    <property type="entry name" value="Phosphoenolpyruvate/pyruvate domain"/>
    <property type="match status" value="1"/>
</dbReference>
<dbReference type="SUPFAM" id="SSF50800">
    <property type="entry name" value="PK beta-barrel domain-like"/>
    <property type="match status" value="1"/>
</dbReference>
<dbReference type="SUPFAM" id="SSF52935">
    <property type="entry name" value="PK C-terminal domain-like"/>
    <property type="match status" value="1"/>
</dbReference>
<dbReference type="PROSITE" id="PS00110">
    <property type="entry name" value="PYRUVATE_KINASE"/>
    <property type="match status" value="1"/>
</dbReference>
<sequence>MMRKSQLQFNTELRVHHPPALFRSNKIICTIGPSSQSVEVLKDLMKAGLNVARMNFSHGTYEYHQKTIDNVRKAASELGIHVGIALDTKGPEIRTGLFPAGDVVIEAHKTVILTTDETFKEKGTAEKFYVDYMNITKVVPVGGHIFVDDGLLDLIVVKISGKDIECVAQNTHTISNRKGINLPNADVDLPAVSEKDLMDLQFGAKNRVDFVFASFIRNADQVNEVRQAFGGKIAVIAKIENYQGIDNIDAIIDAADGIMVARGDLGVEIPAEKVVIAQKMIMSKCNKVGKTVICATQMLDSMTHGPRPTRAEVSDVAKSVLDGADCVMLSGETAKGKYPVETVVYMSRICCETQVTMWNMAAFEAIKNLQSFPLIPEEAICSSAVNSIFELHAKAILVLTNTGRSAHMVSKYRPPVPIICASQELDVCRLLSITRGTIPVYYDTEKLGPDYDREKRVGLAIDVGKQMGVFKEGDVVVAVHADHHTKGFANQIRAIYIK</sequence>
<comment type="catalytic activity">
    <reaction>
        <text>pyruvate + ATP = phosphoenolpyruvate + ADP + H(+)</text>
        <dbReference type="Rhea" id="RHEA:18157"/>
        <dbReference type="ChEBI" id="CHEBI:15361"/>
        <dbReference type="ChEBI" id="CHEBI:15378"/>
        <dbReference type="ChEBI" id="CHEBI:30616"/>
        <dbReference type="ChEBI" id="CHEBI:58702"/>
        <dbReference type="ChEBI" id="CHEBI:456216"/>
        <dbReference type="EC" id="2.7.1.40"/>
    </reaction>
</comment>
<comment type="cofactor">
    <cofactor>
        <name>Mg(2+)</name>
        <dbReference type="ChEBI" id="CHEBI:18420"/>
    </cofactor>
</comment>
<comment type="cofactor">
    <cofactor>
        <name>K(+)</name>
        <dbReference type="ChEBI" id="CHEBI:29103"/>
    </cofactor>
</comment>
<comment type="pathway">
    <text>Carbohydrate degradation; glycolysis; pyruvate from D-glyceraldehyde 3-phosphate: step 5/5.</text>
</comment>
<comment type="subunit">
    <text evidence="1">Homotetramer.</text>
</comment>
<comment type="similarity">
    <text evidence="3">Belongs to the pyruvate kinase family.</text>
</comment>
<protein>
    <recommendedName>
        <fullName>Pyruvate kinase</fullName>
        <shortName>PK</shortName>
        <ecNumber>2.7.1.40</ecNumber>
    </recommendedName>
</protein>
<name>KPYK_TRYBO</name>